<keyword id="KW-0963">Cytoplasm</keyword>
<keyword id="KW-0653">Protein transport</keyword>
<keyword id="KW-1185">Reference proteome</keyword>
<keyword id="KW-0813">Transport</keyword>
<reference key="1">
    <citation type="submission" date="1998-02" db="EMBL/GenBank/DDBJ databases">
        <title>Molecular cloning of a cDNA encoding nuclear transport factor 2 (NTF2) from rice.</title>
        <authorList>
            <person name="Matsuki R."/>
            <person name="Iwasaki T."/>
            <person name="Jiang C."/>
            <person name="Yamamoto N."/>
        </authorList>
    </citation>
    <scope>NUCLEOTIDE SEQUENCE [MRNA]</scope>
    <source>
        <strain>cv. Nipponbare</strain>
    </source>
</reference>
<reference key="2">
    <citation type="journal article" date="2005" name="Nature">
        <title>The map-based sequence of the rice genome.</title>
        <authorList>
            <consortium name="International rice genome sequencing project (IRGSP)"/>
        </authorList>
    </citation>
    <scope>NUCLEOTIDE SEQUENCE [LARGE SCALE GENOMIC DNA]</scope>
    <source>
        <strain>cv. Nipponbare</strain>
    </source>
</reference>
<reference key="3">
    <citation type="journal article" date="2008" name="Nucleic Acids Res.">
        <title>The rice annotation project database (RAP-DB): 2008 update.</title>
        <authorList>
            <consortium name="The rice annotation project (RAP)"/>
        </authorList>
    </citation>
    <scope>GENOME REANNOTATION</scope>
    <source>
        <strain>cv. Nipponbare</strain>
    </source>
</reference>
<reference key="4">
    <citation type="journal article" date="2013" name="Rice">
        <title>Improvement of the Oryza sativa Nipponbare reference genome using next generation sequence and optical map data.</title>
        <authorList>
            <person name="Kawahara Y."/>
            <person name="de la Bastide M."/>
            <person name="Hamilton J.P."/>
            <person name="Kanamori H."/>
            <person name="McCombie W.R."/>
            <person name="Ouyang S."/>
            <person name="Schwartz D.C."/>
            <person name="Tanaka T."/>
            <person name="Wu J."/>
            <person name="Zhou S."/>
            <person name="Childs K.L."/>
            <person name="Davidson R.M."/>
            <person name="Lin H."/>
            <person name="Quesada-Ocampo L."/>
            <person name="Vaillancourt B."/>
            <person name="Sakai H."/>
            <person name="Lee S.S."/>
            <person name="Kim J."/>
            <person name="Numa H."/>
            <person name="Itoh T."/>
            <person name="Buell C.R."/>
            <person name="Matsumoto T."/>
        </authorList>
    </citation>
    <scope>GENOME REANNOTATION</scope>
    <source>
        <strain>cv. Nipponbare</strain>
    </source>
</reference>
<reference key="5">
    <citation type="journal article" date="2005" name="PLoS Biol.">
        <title>The genomes of Oryza sativa: a history of duplications.</title>
        <authorList>
            <person name="Yu J."/>
            <person name="Wang J."/>
            <person name="Lin W."/>
            <person name="Li S."/>
            <person name="Li H."/>
            <person name="Zhou J."/>
            <person name="Ni P."/>
            <person name="Dong W."/>
            <person name="Hu S."/>
            <person name="Zeng C."/>
            <person name="Zhang J."/>
            <person name="Zhang Y."/>
            <person name="Li R."/>
            <person name="Xu Z."/>
            <person name="Li S."/>
            <person name="Li X."/>
            <person name="Zheng H."/>
            <person name="Cong L."/>
            <person name="Lin L."/>
            <person name="Yin J."/>
            <person name="Geng J."/>
            <person name="Li G."/>
            <person name="Shi J."/>
            <person name="Liu J."/>
            <person name="Lv H."/>
            <person name="Li J."/>
            <person name="Wang J."/>
            <person name="Deng Y."/>
            <person name="Ran L."/>
            <person name="Shi X."/>
            <person name="Wang X."/>
            <person name="Wu Q."/>
            <person name="Li C."/>
            <person name="Ren X."/>
            <person name="Wang J."/>
            <person name="Wang X."/>
            <person name="Li D."/>
            <person name="Liu D."/>
            <person name="Zhang X."/>
            <person name="Ji Z."/>
            <person name="Zhao W."/>
            <person name="Sun Y."/>
            <person name="Zhang Z."/>
            <person name="Bao J."/>
            <person name="Han Y."/>
            <person name="Dong L."/>
            <person name="Ji J."/>
            <person name="Chen P."/>
            <person name="Wu S."/>
            <person name="Liu J."/>
            <person name="Xiao Y."/>
            <person name="Bu D."/>
            <person name="Tan J."/>
            <person name="Yang L."/>
            <person name="Ye C."/>
            <person name="Zhang J."/>
            <person name="Xu J."/>
            <person name="Zhou Y."/>
            <person name="Yu Y."/>
            <person name="Zhang B."/>
            <person name="Zhuang S."/>
            <person name="Wei H."/>
            <person name="Liu B."/>
            <person name="Lei M."/>
            <person name="Yu H."/>
            <person name="Li Y."/>
            <person name="Xu H."/>
            <person name="Wei S."/>
            <person name="He X."/>
            <person name="Fang L."/>
            <person name="Zhang Z."/>
            <person name="Zhang Y."/>
            <person name="Huang X."/>
            <person name="Su Z."/>
            <person name="Tong W."/>
            <person name="Li J."/>
            <person name="Tong Z."/>
            <person name="Li S."/>
            <person name="Ye J."/>
            <person name="Wang L."/>
            <person name="Fang L."/>
            <person name="Lei T."/>
            <person name="Chen C.-S."/>
            <person name="Chen H.-C."/>
            <person name="Xu Z."/>
            <person name="Li H."/>
            <person name="Huang H."/>
            <person name="Zhang F."/>
            <person name="Xu H."/>
            <person name="Li N."/>
            <person name="Zhao C."/>
            <person name="Li S."/>
            <person name="Dong L."/>
            <person name="Huang Y."/>
            <person name="Li L."/>
            <person name="Xi Y."/>
            <person name="Qi Q."/>
            <person name="Li W."/>
            <person name="Zhang B."/>
            <person name="Hu W."/>
            <person name="Zhang Y."/>
            <person name="Tian X."/>
            <person name="Jiao Y."/>
            <person name="Liang X."/>
            <person name="Jin J."/>
            <person name="Gao L."/>
            <person name="Zheng W."/>
            <person name="Hao B."/>
            <person name="Liu S.-M."/>
            <person name="Wang W."/>
            <person name="Yuan L."/>
            <person name="Cao M."/>
            <person name="McDermott J."/>
            <person name="Samudrala R."/>
            <person name="Wang J."/>
            <person name="Wong G.K.-S."/>
            <person name="Yang H."/>
        </authorList>
    </citation>
    <scope>NUCLEOTIDE SEQUENCE [LARGE SCALE GENOMIC DNA]</scope>
    <source>
        <strain>cv. Nipponbare</strain>
    </source>
</reference>
<reference key="6">
    <citation type="journal article" date="2003" name="Science">
        <title>Collection, mapping, and annotation of over 28,000 cDNA clones from japonica rice.</title>
        <authorList>
            <consortium name="The rice full-length cDNA consortium"/>
        </authorList>
    </citation>
    <scope>NUCLEOTIDE SEQUENCE [LARGE SCALE MRNA]</scope>
    <source>
        <strain>cv. Nipponbare</strain>
    </source>
</reference>
<dbReference type="EMBL" id="AB011262">
    <property type="protein sequence ID" value="BAA81910.1"/>
    <property type="molecule type" value="mRNA"/>
</dbReference>
<dbReference type="EMBL" id="AP005529">
    <property type="protein sequence ID" value="BAD11649.1"/>
    <property type="molecule type" value="Genomic_DNA"/>
</dbReference>
<dbReference type="EMBL" id="AP008214">
    <property type="protein sequence ID" value="BAF24252.1"/>
    <property type="molecule type" value="Genomic_DNA"/>
</dbReference>
<dbReference type="EMBL" id="AP014964">
    <property type="protein sequence ID" value="BAT06407.1"/>
    <property type="molecule type" value="Genomic_DNA"/>
</dbReference>
<dbReference type="EMBL" id="CM000145">
    <property type="protein sequence ID" value="EAZ43455.1"/>
    <property type="molecule type" value="Genomic_DNA"/>
</dbReference>
<dbReference type="EMBL" id="AK065141">
    <property type="protein sequence ID" value="BAG89385.1"/>
    <property type="molecule type" value="mRNA"/>
</dbReference>
<dbReference type="EMBL" id="AK119730">
    <property type="protein sequence ID" value="BAG99769.1"/>
    <property type="molecule type" value="mRNA"/>
</dbReference>
<dbReference type="RefSeq" id="XP_015650850.1">
    <property type="nucleotide sequence ID" value="XM_015795364.1"/>
</dbReference>
<dbReference type="SMR" id="Q9XJ54"/>
<dbReference type="FunCoup" id="Q9XJ54">
    <property type="interactions" value="3338"/>
</dbReference>
<dbReference type="STRING" id="39947.Q9XJ54"/>
<dbReference type="PaxDb" id="39947-Q9XJ54"/>
<dbReference type="EnsemblPlants" id="Os08t0532300-01">
    <property type="protein sequence ID" value="Os08t0532300-01"/>
    <property type="gene ID" value="Os08g0532300"/>
</dbReference>
<dbReference type="Gramene" id="Os08t0532300-01">
    <property type="protein sequence ID" value="Os08t0532300-01"/>
    <property type="gene ID" value="Os08g0532300"/>
</dbReference>
<dbReference type="KEGG" id="dosa:Os08g0532300"/>
<dbReference type="eggNOG" id="KOG2104">
    <property type="taxonomic scope" value="Eukaryota"/>
</dbReference>
<dbReference type="HOGENOM" id="CLU_131642_0_0_1"/>
<dbReference type="InParanoid" id="Q9XJ54"/>
<dbReference type="OrthoDB" id="6507044at2759"/>
<dbReference type="Proteomes" id="UP000000763">
    <property type="component" value="Chromosome 8"/>
</dbReference>
<dbReference type="Proteomes" id="UP000007752">
    <property type="component" value="Chromosome 8"/>
</dbReference>
<dbReference type="Proteomes" id="UP000059680">
    <property type="component" value="Chromosome 8"/>
</dbReference>
<dbReference type="GO" id="GO:0005737">
    <property type="term" value="C:cytoplasm"/>
    <property type="evidence" value="ECO:0007669"/>
    <property type="project" value="UniProtKB-SubCell"/>
</dbReference>
<dbReference type="GO" id="GO:0044613">
    <property type="term" value="C:nuclear pore central transport channel"/>
    <property type="evidence" value="ECO:0000318"/>
    <property type="project" value="GO_Central"/>
</dbReference>
<dbReference type="GO" id="GO:0006913">
    <property type="term" value="P:nucleocytoplasmic transport"/>
    <property type="evidence" value="ECO:0000318"/>
    <property type="project" value="GO_Central"/>
</dbReference>
<dbReference type="GO" id="GO:0015031">
    <property type="term" value="P:protein transport"/>
    <property type="evidence" value="ECO:0007669"/>
    <property type="project" value="UniProtKB-KW"/>
</dbReference>
<dbReference type="CDD" id="cd00780">
    <property type="entry name" value="NTF2"/>
    <property type="match status" value="1"/>
</dbReference>
<dbReference type="FunFam" id="3.10.450.50:FF:000005">
    <property type="entry name" value="Nuclear transport factor 2"/>
    <property type="match status" value="1"/>
</dbReference>
<dbReference type="Gene3D" id="3.10.450.50">
    <property type="match status" value="1"/>
</dbReference>
<dbReference type="InterPro" id="IPR045875">
    <property type="entry name" value="NTF2"/>
</dbReference>
<dbReference type="InterPro" id="IPR032710">
    <property type="entry name" value="NTF2-like_dom_sf"/>
</dbReference>
<dbReference type="InterPro" id="IPR002075">
    <property type="entry name" value="NTF2_dom"/>
</dbReference>
<dbReference type="InterPro" id="IPR018222">
    <property type="entry name" value="Nuclear_transport_factor_2_euk"/>
</dbReference>
<dbReference type="PANTHER" id="PTHR12612">
    <property type="entry name" value="NUCLEAR TRANSPORT FACTOR 2"/>
    <property type="match status" value="1"/>
</dbReference>
<dbReference type="Pfam" id="PF02136">
    <property type="entry name" value="NTF2"/>
    <property type="match status" value="1"/>
</dbReference>
<dbReference type="SUPFAM" id="SSF54427">
    <property type="entry name" value="NTF2-like"/>
    <property type="match status" value="1"/>
</dbReference>
<dbReference type="PROSITE" id="PS50177">
    <property type="entry name" value="NTF2_DOMAIN"/>
    <property type="match status" value="1"/>
</dbReference>
<protein>
    <recommendedName>
        <fullName>Nuclear transport factor 2</fullName>
        <shortName>NTF-2</shortName>
    </recommendedName>
</protein>
<evidence type="ECO:0000250" key="1"/>
<evidence type="ECO:0000255" key="2">
    <source>
        <dbReference type="PROSITE-ProRule" id="PRU00137"/>
    </source>
</evidence>
<evidence type="ECO:0000312" key="3">
    <source>
        <dbReference type="EMBL" id="EAZ43455.1"/>
    </source>
</evidence>
<proteinExistence type="evidence at transcript level"/>
<feature type="chain" id="PRO_0000194781" description="Nuclear transport factor 2">
    <location>
        <begin position="1"/>
        <end position="122"/>
    </location>
</feature>
<feature type="domain" description="NTF2" evidence="2">
    <location>
        <begin position="6"/>
        <end position="119"/>
    </location>
</feature>
<sequence>MDADAVAKAFVEHYYRTFDTNRPALVSLYQDGSMLTFEGQQFLGAAAIAGKLGSLPFAQCHHDINTVDCQPSGPQGGMLVFVSGSLRTGPDEHPLKFSQMFQLLPAGGNFYVQNDMFRLNYG</sequence>
<accession>Q9XJ54</accession>
<accession>Q0J463</accession>
<accession>Q6YZE0</accession>
<comment type="function">
    <text evidence="1">Facilitates protein transport into the nucleus. Could be part of a multicomponent system of cytosolic factors that assemble at the pore complex during nuclear import (By similarity).</text>
</comment>
<comment type="subcellular location">
    <subcellularLocation>
        <location evidence="1">Cytoplasm</location>
    </subcellularLocation>
</comment>
<name>NTF2_ORYSJ</name>
<organism>
    <name type="scientific">Oryza sativa subsp. japonica</name>
    <name type="common">Rice</name>
    <dbReference type="NCBI Taxonomy" id="39947"/>
    <lineage>
        <taxon>Eukaryota</taxon>
        <taxon>Viridiplantae</taxon>
        <taxon>Streptophyta</taxon>
        <taxon>Embryophyta</taxon>
        <taxon>Tracheophyta</taxon>
        <taxon>Spermatophyta</taxon>
        <taxon>Magnoliopsida</taxon>
        <taxon>Liliopsida</taxon>
        <taxon>Poales</taxon>
        <taxon>Poaceae</taxon>
        <taxon>BOP clade</taxon>
        <taxon>Oryzoideae</taxon>
        <taxon>Oryzeae</taxon>
        <taxon>Oryzinae</taxon>
        <taxon>Oryza</taxon>
        <taxon>Oryza sativa</taxon>
    </lineage>
</organism>
<gene>
    <name type="primary">NTF2</name>
    <name type="ordered locus">Os08g0532300</name>
    <name type="ordered locus">LOC_Os08g42000</name>
    <name evidence="3" type="ORF">OsJ_28061</name>
    <name type="ORF">P0702E04.18</name>
</gene>